<keyword id="KW-0002">3D-structure</keyword>
<keyword id="KW-1185">Reference proteome</keyword>
<accession>Q9M015</accession>
<accession>Q0WT00</accession>
<accession>Q84VV4</accession>
<reference key="1">
    <citation type="journal article" date="2000" name="Nature">
        <title>Sequence and analysis of chromosome 5 of the plant Arabidopsis thaliana.</title>
        <authorList>
            <person name="Tabata S."/>
            <person name="Kaneko T."/>
            <person name="Nakamura Y."/>
            <person name="Kotani H."/>
            <person name="Kato T."/>
            <person name="Asamizu E."/>
            <person name="Miyajima N."/>
            <person name="Sasamoto S."/>
            <person name="Kimura T."/>
            <person name="Hosouchi T."/>
            <person name="Kawashima K."/>
            <person name="Kohara M."/>
            <person name="Matsumoto M."/>
            <person name="Matsuno A."/>
            <person name="Muraki A."/>
            <person name="Nakayama S."/>
            <person name="Nakazaki N."/>
            <person name="Naruo K."/>
            <person name="Okumura S."/>
            <person name="Shinpo S."/>
            <person name="Takeuchi C."/>
            <person name="Wada T."/>
            <person name="Watanabe A."/>
            <person name="Yamada M."/>
            <person name="Yasuda M."/>
            <person name="Sato S."/>
            <person name="de la Bastide M."/>
            <person name="Huang E."/>
            <person name="Spiegel L."/>
            <person name="Gnoj L."/>
            <person name="O'Shaughnessy A."/>
            <person name="Preston R."/>
            <person name="Habermann K."/>
            <person name="Murray J."/>
            <person name="Johnson D."/>
            <person name="Rohlfing T."/>
            <person name="Nelson J."/>
            <person name="Stoneking T."/>
            <person name="Pepin K."/>
            <person name="Spieth J."/>
            <person name="Sekhon M."/>
            <person name="Armstrong J."/>
            <person name="Becker M."/>
            <person name="Belter E."/>
            <person name="Cordum H."/>
            <person name="Cordes M."/>
            <person name="Courtney L."/>
            <person name="Courtney W."/>
            <person name="Dante M."/>
            <person name="Du H."/>
            <person name="Edwards J."/>
            <person name="Fryman J."/>
            <person name="Haakensen B."/>
            <person name="Lamar E."/>
            <person name="Latreille P."/>
            <person name="Leonard S."/>
            <person name="Meyer R."/>
            <person name="Mulvaney E."/>
            <person name="Ozersky P."/>
            <person name="Riley A."/>
            <person name="Strowmatt C."/>
            <person name="Wagner-McPherson C."/>
            <person name="Wollam A."/>
            <person name="Yoakum M."/>
            <person name="Bell M."/>
            <person name="Dedhia N."/>
            <person name="Parnell L."/>
            <person name="Shah R."/>
            <person name="Rodriguez M."/>
            <person name="Hoon See L."/>
            <person name="Vil D."/>
            <person name="Baker J."/>
            <person name="Kirchoff K."/>
            <person name="Toth K."/>
            <person name="King L."/>
            <person name="Bahret A."/>
            <person name="Miller B."/>
            <person name="Marra M.A."/>
            <person name="Martienssen R."/>
            <person name="McCombie W.R."/>
            <person name="Wilson R.K."/>
            <person name="Murphy G."/>
            <person name="Bancroft I."/>
            <person name="Volckaert G."/>
            <person name="Wambutt R."/>
            <person name="Duesterhoeft A."/>
            <person name="Stiekema W."/>
            <person name="Pohl T."/>
            <person name="Entian K.-D."/>
            <person name="Terryn N."/>
            <person name="Hartley N."/>
            <person name="Bent E."/>
            <person name="Johnson S."/>
            <person name="Langham S.-A."/>
            <person name="McCullagh B."/>
            <person name="Robben J."/>
            <person name="Grymonprez B."/>
            <person name="Zimmermann W."/>
            <person name="Ramsperger U."/>
            <person name="Wedler H."/>
            <person name="Balke K."/>
            <person name="Wedler E."/>
            <person name="Peters S."/>
            <person name="van Staveren M."/>
            <person name="Dirkse W."/>
            <person name="Mooijman P."/>
            <person name="Klein Lankhorst R."/>
            <person name="Weitzenegger T."/>
            <person name="Bothe G."/>
            <person name="Rose M."/>
            <person name="Hauf J."/>
            <person name="Berneiser S."/>
            <person name="Hempel S."/>
            <person name="Feldpausch M."/>
            <person name="Lamberth S."/>
            <person name="Villarroel R."/>
            <person name="Gielen J."/>
            <person name="Ardiles W."/>
            <person name="Bents O."/>
            <person name="Lemcke K."/>
            <person name="Kolesov G."/>
            <person name="Mayer K.F.X."/>
            <person name="Rudd S."/>
            <person name="Schoof H."/>
            <person name="Schueller C."/>
            <person name="Zaccaria P."/>
            <person name="Mewes H.-W."/>
            <person name="Bevan M."/>
            <person name="Fransz P.F."/>
        </authorList>
    </citation>
    <scope>NUCLEOTIDE SEQUENCE [LARGE SCALE GENOMIC DNA]</scope>
    <source>
        <strain>cv. Columbia</strain>
    </source>
</reference>
<reference key="2">
    <citation type="journal article" date="2017" name="Plant J.">
        <title>Araport11: a complete reannotation of the Arabidopsis thaliana reference genome.</title>
        <authorList>
            <person name="Cheng C.Y."/>
            <person name="Krishnakumar V."/>
            <person name="Chan A.P."/>
            <person name="Thibaud-Nissen F."/>
            <person name="Schobel S."/>
            <person name="Town C.D."/>
        </authorList>
    </citation>
    <scope>GENOME REANNOTATION</scope>
    <source>
        <strain>cv. Columbia</strain>
    </source>
</reference>
<reference key="3">
    <citation type="journal article" date="2003" name="Science">
        <title>Empirical analysis of transcriptional activity in the Arabidopsis genome.</title>
        <authorList>
            <person name="Yamada K."/>
            <person name="Lim J."/>
            <person name="Dale J.M."/>
            <person name="Chen H."/>
            <person name="Shinn P."/>
            <person name="Palm C.J."/>
            <person name="Southwick A.M."/>
            <person name="Wu H.C."/>
            <person name="Kim C.J."/>
            <person name="Nguyen M."/>
            <person name="Pham P.K."/>
            <person name="Cheuk R.F."/>
            <person name="Karlin-Newmann G."/>
            <person name="Liu S.X."/>
            <person name="Lam B."/>
            <person name="Sakano H."/>
            <person name="Wu T."/>
            <person name="Yu G."/>
            <person name="Miranda M."/>
            <person name="Quach H.L."/>
            <person name="Tripp M."/>
            <person name="Chang C.H."/>
            <person name="Lee J.M."/>
            <person name="Toriumi M.J."/>
            <person name="Chan M.M."/>
            <person name="Tang C.C."/>
            <person name="Onodera C.S."/>
            <person name="Deng J.M."/>
            <person name="Akiyama K."/>
            <person name="Ansari Y."/>
            <person name="Arakawa T."/>
            <person name="Banh J."/>
            <person name="Banno F."/>
            <person name="Bowser L."/>
            <person name="Brooks S.Y."/>
            <person name="Carninci P."/>
            <person name="Chao Q."/>
            <person name="Choy N."/>
            <person name="Enju A."/>
            <person name="Goldsmith A.D."/>
            <person name="Gurjal M."/>
            <person name="Hansen N.F."/>
            <person name="Hayashizaki Y."/>
            <person name="Johnson-Hopson C."/>
            <person name="Hsuan V.W."/>
            <person name="Iida K."/>
            <person name="Karnes M."/>
            <person name="Khan S."/>
            <person name="Koesema E."/>
            <person name="Ishida J."/>
            <person name="Jiang P.X."/>
            <person name="Jones T."/>
            <person name="Kawai J."/>
            <person name="Kamiya A."/>
            <person name="Meyers C."/>
            <person name="Nakajima M."/>
            <person name="Narusaka M."/>
            <person name="Seki M."/>
            <person name="Sakurai T."/>
            <person name="Satou M."/>
            <person name="Tamse R."/>
            <person name="Vaysberg M."/>
            <person name="Wallender E.K."/>
            <person name="Wong C."/>
            <person name="Yamamura Y."/>
            <person name="Yuan S."/>
            <person name="Shinozaki K."/>
            <person name="Davis R.W."/>
            <person name="Theologis A."/>
            <person name="Ecker J.R."/>
        </authorList>
    </citation>
    <scope>NUCLEOTIDE SEQUENCE [LARGE SCALE MRNA]</scope>
    <source>
        <strain>cv. Columbia</strain>
    </source>
</reference>
<reference key="4">
    <citation type="submission" date="2006-07" db="EMBL/GenBank/DDBJ databases">
        <title>Large-scale analysis of RIKEN Arabidopsis full-length (RAFL) cDNAs.</title>
        <authorList>
            <person name="Totoki Y."/>
            <person name="Seki M."/>
            <person name="Ishida J."/>
            <person name="Nakajima M."/>
            <person name="Enju A."/>
            <person name="Kamiya A."/>
            <person name="Narusaka M."/>
            <person name="Shin-i T."/>
            <person name="Nakagawa M."/>
            <person name="Sakamoto N."/>
            <person name="Oishi K."/>
            <person name="Kohara Y."/>
            <person name="Kobayashi M."/>
            <person name="Toyoda A."/>
            <person name="Sakaki Y."/>
            <person name="Sakurai T."/>
            <person name="Iida K."/>
            <person name="Akiyama K."/>
            <person name="Satou M."/>
            <person name="Toyoda T."/>
            <person name="Konagaya A."/>
            <person name="Carninci P."/>
            <person name="Kawai J."/>
            <person name="Hayashizaki Y."/>
            <person name="Shinozaki K."/>
        </authorList>
    </citation>
    <scope>NUCLEOTIDE SEQUENCE [LARGE SCALE MRNA]</scope>
    <source>
        <strain>cv. Columbia</strain>
    </source>
</reference>
<reference key="5">
    <citation type="submission" date="2002-03" db="EMBL/GenBank/DDBJ databases">
        <title>Full-length cDNA from Arabidopsis thaliana.</title>
        <authorList>
            <person name="Brover V.V."/>
            <person name="Troukhan M.E."/>
            <person name="Alexandrov N.A."/>
            <person name="Lu Y.-P."/>
            <person name="Flavell R.B."/>
            <person name="Feldmann K.A."/>
        </authorList>
    </citation>
    <scope>NUCLEOTIDE SEQUENCE [LARGE SCALE MRNA]</scope>
</reference>
<reference key="6">
    <citation type="submission" date="2005-02" db="PDB data bank">
        <title>Solution NMR structure of At5g01610, an Arabidopsis thaliana protein containing DUF538 domain.</title>
        <authorList>
            <consortium name="Center for eukaryotic structural genomics (CESG)"/>
        </authorList>
    </citation>
    <scope>STRUCTURE BY NMR OF 2-170</scope>
</reference>
<dbReference type="EMBL" id="AL161946">
    <property type="protein sequence ID" value="CAB82277.1"/>
    <property type="molecule type" value="Genomic_DNA"/>
</dbReference>
<dbReference type="EMBL" id="CP002688">
    <property type="protein sequence ID" value="AED90365.1"/>
    <property type="molecule type" value="Genomic_DNA"/>
</dbReference>
<dbReference type="EMBL" id="CP002688">
    <property type="protein sequence ID" value="ANM68392.1"/>
    <property type="molecule type" value="Genomic_DNA"/>
</dbReference>
<dbReference type="EMBL" id="BT004797">
    <property type="protein sequence ID" value="AAO44063.1"/>
    <property type="molecule type" value="mRNA"/>
</dbReference>
<dbReference type="EMBL" id="AK227765">
    <property type="protein sequence ID" value="BAE99748.1"/>
    <property type="molecule type" value="mRNA"/>
</dbReference>
<dbReference type="EMBL" id="AY086139">
    <property type="protein sequence ID" value="AAM63344.1"/>
    <property type="molecule type" value="mRNA"/>
</dbReference>
<dbReference type="PIR" id="T48182">
    <property type="entry name" value="T48182"/>
</dbReference>
<dbReference type="RefSeq" id="NP_001318453.1">
    <property type="nucleotide sequence ID" value="NM_001342600.1"/>
</dbReference>
<dbReference type="RefSeq" id="NP_195781.1">
    <property type="nucleotide sequence ID" value="NM_120239.3"/>
</dbReference>
<dbReference type="PDB" id="1YDU">
    <property type="method" value="NMR"/>
    <property type="chains" value="A=2-170"/>
</dbReference>
<dbReference type="PDBsum" id="1YDU"/>
<dbReference type="BMRB" id="Q9M015"/>
<dbReference type="SMR" id="Q9M015"/>
<dbReference type="BioGRID" id="16994">
    <property type="interactions" value="1"/>
</dbReference>
<dbReference type="FunCoup" id="Q9M015">
    <property type="interactions" value="16"/>
</dbReference>
<dbReference type="PaxDb" id="3702-AT5G01610.1"/>
<dbReference type="ProteomicsDB" id="243154"/>
<dbReference type="DNASU" id="831718"/>
<dbReference type="EnsemblPlants" id="AT5G01610.1">
    <property type="protein sequence ID" value="AT5G01610.1"/>
    <property type="gene ID" value="AT5G01610"/>
</dbReference>
<dbReference type="EnsemblPlants" id="AT5G01610.2">
    <property type="protein sequence ID" value="AT5G01610.2"/>
    <property type="gene ID" value="AT5G01610"/>
</dbReference>
<dbReference type="GeneID" id="831718"/>
<dbReference type="Gramene" id="AT5G01610.1">
    <property type="protein sequence ID" value="AT5G01610.1"/>
    <property type="gene ID" value="AT5G01610"/>
</dbReference>
<dbReference type="Gramene" id="AT5G01610.2">
    <property type="protein sequence ID" value="AT5G01610.2"/>
    <property type="gene ID" value="AT5G01610"/>
</dbReference>
<dbReference type="KEGG" id="ath:AT5G01610"/>
<dbReference type="Araport" id="AT5G01610"/>
<dbReference type="TAIR" id="AT5G01610"/>
<dbReference type="eggNOG" id="ENOG502QVEA">
    <property type="taxonomic scope" value="Eukaryota"/>
</dbReference>
<dbReference type="HOGENOM" id="CLU_078918_0_0_1"/>
<dbReference type="InParanoid" id="Q9M015"/>
<dbReference type="OMA" id="VMIPSIC"/>
<dbReference type="PhylomeDB" id="Q9M015"/>
<dbReference type="EvolutionaryTrace" id="Q9M015"/>
<dbReference type="PRO" id="PR:Q9M015"/>
<dbReference type="Proteomes" id="UP000006548">
    <property type="component" value="Chromosome 5"/>
</dbReference>
<dbReference type="ExpressionAtlas" id="Q9M015">
    <property type="expression patterns" value="baseline and differential"/>
</dbReference>
<dbReference type="Gene3D" id="2.30.240.10">
    <property type="entry name" value="At5g01610-like"/>
    <property type="match status" value="1"/>
</dbReference>
<dbReference type="InterPro" id="IPR036758">
    <property type="entry name" value="At5g01610-like"/>
</dbReference>
<dbReference type="InterPro" id="IPR007493">
    <property type="entry name" value="DUF538"/>
</dbReference>
<dbReference type="PANTHER" id="PTHR31676:SF77">
    <property type="entry name" value="DUF538 FAMILY PROTEIN"/>
    <property type="match status" value="1"/>
</dbReference>
<dbReference type="PANTHER" id="PTHR31676">
    <property type="entry name" value="T31J12.3 PROTEIN-RELATED"/>
    <property type="match status" value="1"/>
</dbReference>
<dbReference type="Pfam" id="PF04398">
    <property type="entry name" value="DUF538"/>
    <property type="match status" value="1"/>
</dbReference>
<dbReference type="SUPFAM" id="SSF141562">
    <property type="entry name" value="At5g01610-like"/>
    <property type="match status" value="1"/>
</dbReference>
<organism>
    <name type="scientific">Arabidopsis thaliana</name>
    <name type="common">Mouse-ear cress</name>
    <dbReference type="NCBI Taxonomy" id="3702"/>
    <lineage>
        <taxon>Eukaryota</taxon>
        <taxon>Viridiplantae</taxon>
        <taxon>Streptophyta</taxon>
        <taxon>Embryophyta</taxon>
        <taxon>Tracheophyta</taxon>
        <taxon>Spermatophyta</taxon>
        <taxon>Magnoliopsida</taxon>
        <taxon>eudicotyledons</taxon>
        <taxon>Gunneridae</taxon>
        <taxon>Pentapetalae</taxon>
        <taxon>rosids</taxon>
        <taxon>malvids</taxon>
        <taxon>Brassicales</taxon>
        <taxon>Brassicaceae</taxon>
        <taxon>Camelineae</taxon>
        <taxon>Arabidopsis</taxon>
    </lineage>
</organism>
<gene>
    <name type="ordered locus">At5g01610</name>
    <name type="ORF">F7A7.130</name>
</gene>
<evidence type="ECO:0000305" key="1"/>
<evidence type="ECO:0007829" key="2">
    <source>
        <dbReference type="PDB" id="1YDU"/>
    </source>
</evidence>
<proteinExistence type="evidence at protein level"/>
<name>Y5161_ARATH</name>
<sequence length="170" mass="19069">MDQIFNKVGSYWLGQKANKQFDSVGNDLNSVSTSIEGGTKWLVNKIKGKMQKPLPELLKEYDLPIGIFPGDATNYEFDEETKKLTVLIPSICEVGYKDSSVLKFTTTVTGHLEKGKLTDVEGIKTKVMIWVKVTSISTDASKVYFTAGMKKSRSRDAYEVQRNGLRVDKF</sequence>
<feature type="chain" id="PRO_0000220615" description="Uncharacterized protein At5g01610">
    <location>
        <begin position="1"/>
        <end position="170"/>
    </location>
</feature>
<feature type="sequence conflict" description="In Ref. 3; AAO44063 and 4; BAE99748." evidence="1" ref="3 4">
    <original>Y</original>
    <variation>C</variation>
    <location>
        <position position="61"/>
    </location>
</feature>
<feature type="turn" evidence="2">
    <location>
        <begin position="46"/>
        <end position="51"/>
    </location>
</feature>
<feature type="helix" evidence="2">
    <location>
        <begin position="55"/>
        <end position="61"/>
    </location>
</feature>
<feature type="turn" evidence="2">
    <location>
        <begin position="67"/>
        <end position="69"/>
    </location>
</feature>
<feature type="strand" evidence="2">
    <location>
        <begin position="70"/>
        <end position="72"/>
    </location>
</feature>
<feature type="strand" evidence="2">
    <location>
        <begin position="74"/>
        <end position="77"/>
    </location>
</feature>
<feature type="turn" evidence="2">
    <location>
        <begin position="79"/>
        <end position="81"/>
    </location>
</feature>
<feature type="strand" evidence="2">
    <location>
        <begin position="83"/>
        <end position="87"/>
    </location>
</feature>
<feature type="strand" evidence="2">
    <location>
        <begin position="92"/>
        <end position="96"/>
    </location>
</feature>
<feature type="strand" evidence="2">
    <location>
        <begin position="99"/>
        <end position="104"/>
    </location>
</feature>
<feature type="strand" evidence="2">
    <location>
        <begin position="106"/>
        <end position="112"/>
    </location>
</feature>
<feature type="strand" evidence="2">
    <location>
        <begin position="117"/>
        <end position="122"/>
    </location>
</feature>
<feature type="strand" evidence="2">
    <location>
        <begin position="124"/>
        <end position="132"/>
    </location>
</feature>
<feature type="strand" evidence="2">
    <location>
        <begin position="136"/>
        <end position="138"/>
    </location>
</feature>
<feature type="strand" evidence="2">
    <location>
        <begin position="140"/>
        <end position="144"/>
    </location>
</feature>
<feature type="strand" evidence="2">
    <location>
        <begin position="148"/>
        <end position="151"/>
    </location>
</feature>
<feature type="turn" evidence="2">
    <location>
        <begin position="155"/>
        <end position="158"/>
    </location>
</feature>
<protein>
    <recommendedName>
        <fullName>Uncharacterized protein At5g01610</fullName>
    </recommendedName>
</protein>